<gene>
    <name evidence="1" type="primary">rps4</name>
    <name type="ordered locus">Mevan_0631</name>
</gene>
<proteinExistence type="inferred from homology"/>
<keyword id="KW-0687">Ribonucleoprotein</keyword>
<keyword id="KW-0689">Ribosomal protein</keyword>
<keyword id="KW-0694">RNA-binding</keyword>
<keyword id="KW-0699">rRNA-binding</keyword>
<dbReference type="EMBL" id="CP000742">
    <property type="protein sequence ID" value="ABR54537.1"/>
    <property type="molecule type" value="Genomic_DNA"/>
</dbReference>
<dbReference type="RefSeq" id="WP_011972440.1">
    <property type="nucleotide sequence ID" value="NC_009634.1"/>
</dbReference>
<dbReference type="SMR" id="A6UPW5"/>
<dbReference type="STRING" id="406327.Mevan_0631"/>
<dbReference type="GeneID" id="5324688"/>
<dbReference type="KEGG" id="mvn:Mevan_0631"/>
<dbReference type="eggNOG" id="arCOG04239">
    <property type="taxonomic scope" value="Archaea"/>
</dbReference>
<dbReference type="HOGENOM" id="CLU_089738_1_1_2"/>
<dbReference type="OrthoDB" id="10429at2157"/>
<dbReference type="Proteomes" id="UP000001107">
    <property type="component" value="Chromosome"/>
</dbReference>
<dbReference type="GO" id="GO:0015935">
    <property type="term" value="C:small ribosomal subunit"/>
    <property type="evidence" value="ECO:0007669"/>
    <property type="project" value="InterPro"/>
</dbReference>
<dbReference type="GO" id="GO:0019843">
    <property type="term" value="F:rRNA binding"/>
    <property type="evidence" value="ECO:0007669"/>
    <property type="project" value="UniProtKB-UniRule"/>
</dbReference>
<dbReference type="GO" id="GO:0003735">
    <property type="term" value="F:structural constituent of ribosome"/>
    <property type="evidence" value="ECO:0007669"/>
    <property type="project" value="InterPro"/>
</dbReference>
<dbReference type="GO" id="GO:0042274">
    <property type="term" value="P:ribosomal small subunit biogenesis"/>
    <property type="evidence" value="ECO:0007669"/>
    <property type="project" value="TreeGrafter"/>
</dbReference>
<dbReference type="GO" id="GO:0006412">
    <property type="term" value="P:translation"/>
    <property type="evidence" value="ECO:0007669"/>
    <property type="project" value="UniProtKB-UniRule"/>
</dbReference>
<dbReference type="CDD" id="cd00165">
    <property type="entry name" value="S4"/>
    <property type="match status" value="1"/>
</dbReference>
<dbReference type="FunFam" id="3.10.290.10:FF:000026">
    <property type="entry name" value="30S ribosomal protein S4"/>
    <property type="match status" value="1"/>
</dbReference>
<dbReference type="Gene3D" id="3.10.290.10">
    <property type="entry name" value="RNA-binding S4 domain"/>
    <property type="match status" value="1"/>
</dbReference>
<dbReference type="HAMAP" id="MF_01306_A">
    <property type="entry name" value="Ribosomal_uS4_A"/>
    <property type="match status" value="1"/>
</dbReference>
<dbReference type="InterPro" id="IPR022801">
    <property type="entry name" value="Ribosomal_uS4"/>
</dbReference>
<dbReference type="InterPro" id="IPR022802">
    <property type="entry name" value="Ribosomal_uS4_arc"/>
</dbReference>
<dbReference type="InterPro" id="IPR018079">
    <property type="entry name" value="Ribosomal_uS4_CS"/>
</dbReference>
<dbReference type="InterPro" id="IPR005710">
    <property type="entry name" value="Ribosomal_uS4_euk/arc"/>
</dbReference>
<dbReference type="InterPro" id="IPR001912">
    <property type="entry name" value="Ribosomal_uS4_N"/>
</dbReference>
<dbReference type="InterPro" id="IPR002942">
    <property type="entry name" value="S4_RNA-bd"/>
</dbReference>
<dbReference type="InterPro" id="IPR036986">
    <property type="entry name" value="S4_RNA-bd_sf"/>
</dbReference>
<dbReference type="NCBIfam" id="NF003139">
    <property type="entry name" value="PRK04051.1"/>
    <property type="match status" value="1"/>
</dbReference>
<dbReference type="NCBIfam" id="TIGR01018">
    <property type="entry name" value="uS4_arch"/>
    <property type="match status" value="1"/>
</dbReference>
<dbReference type="PANTHER" id="PTHR11831">
    <property type="entry name" value="30S 40S RIBOSOMAL PROTEIN"/>
    <property type="match status" value="1"/>
</dbReference>
<dbReference type="PANTHER" id="PTHR11831:SF5">
    <property type="entry name" value="40S RIBOSOMAL PROTEIN S9"/>
    <property type="match status" value="1"/>
</dbReference>
<dbReference type="Pfam" id="PF01479">
    <property type="entry name" value="S4"/>
    <property type="match status" value="1"/>
</dbReference>
<dbReference type="SMART" id="SM01390">
    <property type="entry name" value="Ribosomal_S4"/>
    <property type="match status" value="1"/>
</dbReference>
<dbReference type="SMART" id="SM00363">
    <property type="entry name" value="S4"/>
    <property type="match status" value="1"/>
</dbReference>
<dbReference type="SUPFAM" id="SSF55174">
    <property type="entry name" value="Alpha-L RNA-binding motif"/>
    <property type="match status" value="1"/>
</dbReference>
<dbReference type="PROSITE" id="PS00632">
    <property type="entry name" value="RIBOSOMAL_S4"/>
    <property type="match status" value="1"/>
</dbReference>
<dbReference type="PROSITE" id="PS50889">
    <property type="entry name" value="S4"/>
    <property type="match status" value="1"/>
</dbReference>
<sequence length="178" mass="20507">MGDPRRLGKKYDTPNHPWIGERIQKEREISHKYGLVNKKELWKMETQLRNYRRQARKLISDTTTQGGKEAVQLFNVLKRYAILVEQEPTLDHILSLNIESILERRLQTLVYRKGLAKTAKQARQLIVHGHIAVNGRRVTSPSYLVSVSENNAIGYVPNSPMALENHPERTTAVSEENQ</sequence>
<organism>
    <name type="scientific">Methanococcus vannielii (strain ATCC 35089 / DSM 1224 / JCM 13029 / OCM 148 / SB)</name>
    <dbReference type="NCBI Taxonomy" id="406327"/>
    <lineage>
        <taxon>Archaea</taxon>
        <taxon>Methanobacteriati</taxon>
        <taxon>Methanobacteriota</taxon>
        <taxon>Methanomada group</taxon>
        <taxon>Methanococci</taxon>
        <taxon>Methanococcales</taxon>
        <taxon>Methanococcaceae</taxon>
        <taxon>Methanococcus</taxon>
    </lineage>
</organism>
<protein>
    <recommendedName>
        <fullName evidence="1">Small ribosomal subunit protein uS4</fullName>
    </recommendedName>
    <alternativeName>
        <fullName evidence="2">30S ribosomal protein S4</fullName>
    </alternativeName>
</protein>
<reference key="1">
    <citation type="submission" date="2007-06" db="EMBL/GenBank/DDBJ databases">
        <title>Complete sequence of Methanococcus vannielii SB.</title>
        <authorList>
            <consortium name="US DOE Joint Genome Institute"/>
            <person name="Copeland A."/>
            <person name="Lucas S."/>
            <person name="Lapidus A."/>
            <person name="Barry K."/>
            <person name="Glavina del Rio T."/>
            <person name="Dalin E."/>
            <person name="Tice H."/>
            <person name="Pitluck S."/>
            <person name="Chain P."/>
            <person name="Malfatti S."/>
            <person name="Shin M."/>
            <person name="Vergez L."/>
            <person name="Schmutz J."/>
            <person name="Larimer F."/>
            <person name="Land M."/>
            <person name="Hauser L."/>
            <person name="Kyrpides N."/>
            <person name="Anderson I."/>
            <person name="Sieprawska-Lupa M."/>
            <person name="Whitman W.B."/>
            <person name="Richardson P."/>
        </authorList>
    </citation>
    <scope>NUCLEOTIDE SEQUENCE [LARGE SCALE GENOMIC DNA]</scope>
    <source>
        <strain>ATCC 35089 / DSM 1224 / JCM 13029 / OCM 148 / SB</strain>
    </source>
</reference>
<feature type="chain" id="PRO_0000322360" description="Small ribosomal subunit protein uS4">
    <location>
        <begin position="1"/>
        <end position="178"/>
    </location>
</feature>
<feature type="domain" description="S4 RNA-binding" evidence="1">
    <location>
        <begin position="104"/>
        <end position="166"/>
    </location>
</feature>
<evidence type="ECO:0000255" key="1">
    <source>
        <dbReference type="HAMAP-Rule" id="MF_01306"/>
    </source>
</evidence>
<evidence type="ECO:0000305" key="2"/>
<accession>A6UPW5</accession>
<comment type="function">
    <text evidence="1">One of the primary rRNA binding proteins, it binds directly to 16S rRNA where it nucleates assembly of the body of the 30S subunit.</text>
</comment>
<comment type="function">
    <text evidence="1">With S5 and S12 plays an important role in translational accuracy.</text>
</comment>
<comment type="subunit">
    <text evidence="1">Part of the 30S ribosomal subunit. Contacts protein S5. The interaction surface between S4 and S5 is involved in control of translational fidelity.</text>
</comment>
<comment type="similarity">
    <text evidence="1">Belongs to the universal ribosomal protein uS4 family.</text>
</comment>
<name>RS4_METVS</name>